<evidence type="ECO:0000255" key="1">
    <source>
        <dbReference type="HAMAP-Rule" id="MF_00412"/>
    </source>
</evidence>
<feature type="chain" id="PRO_1000049944" description="Gamma-glutamyl phosphate reductase">
    <location>
        <begin position="1"/>
        <end position="417"/>
    </location>
</feature>
<keyword id="KW-0028">Amino-acid biosynthesis</keyword>
<keyword id="KW-0963">Cytoplasm</keyword>
<keyword id="KW-0521">NADP</keyword>
<keyword id="KW-0560">Oxidoreductase</keyword>
<keyword id="KW-0641">Proline biosynthesis</keyword>
<keyword id="KW-1185">Reference proteome</keyword>
<dbReference type="EC" id="1.2.1.41" evidence="1"/>
<dbReference type="EMBL" id="CP000382">
    <property type="protein sequence ID" value="ABK60892.1"/>
    <property type="molecule type" value="Genomic_DNA"/>
</dbReference>
<dbReference type="RefSeq" id="WP_011721027.1">
    <property type="nucleotide sequence ID" value="NC_008593.1"/>
</dbReference>
<dbReference type="SMR" id="A0PXA4"/>
<dbReference type="STRING" id="386415.NT01CX_0901"/>
<dbReference type="KEGG" id="cno:NT01CX_0901"/>
<dbReference type="eggNOG" id="COG0014">
    <property type="taxonomic scope" value="Bacteria"/>
</dbReference>
<dbReference type="HOGENOM" id="CLU_030231_0_0_9"/>
<dbReference type="UniPathway" id="UPA00098">
    <property type="reaction ID" value="UER00360"/>
</dbReference>
<dbReference type="Proteomes" id="UP000008220">
    <property type="component" value="Chromosome"/>
</dbReference>
<dbReference type="GO" id="GO:0005737">
    <property type="term" value="C:cytoplasm"/>
    <property type="evidence" value="ECO:0007669"/>
    <property type="project" value="UniProtKB-SubCell"/>
</dbReference>
<dbReference type="GO" id="GO:0004350">
    <property type="term" value="F:glutamate-5-semialdehyde dehydrogenase activity"/>
    <property type="evidence" value="ECO:0007669"/>
    <property type="project" value="UniProtKB-UniRule"/>
</dbReference>
<dbReference type="GO" id="GO:0050661">
    <property type="term" value="F:NADP binding"/>
    <property type="evidence" value="ECO:0007669"/>
    <property type="project" value="InterPro"/>
</dbReference>
<dbReference type="GO" id="GO:0055129">
    <property type="term" value="P:L-proline biosynthetic process"/>
    <property type="evidence" value="ECO:0007669"/>
    <property type="project" value="UniProtKB-UniRule"/>
</dbReference>
<dbReference type="CDD" id="cd07079">
    <property type="entry name" value="ALDH_F18-19_ProA-GPR"/>
    <property type="match status" value="1"/>
</dbReference>
<dbReference type="FunFam" id="3.40.309.10:FF:000006">
    <property type="entry name" value="Gamma-glutamyl phosphate reductase"/>
    <property type="match status" value="1"/>
</dbReference>
<dbReference type="Gene3D" id="3.40.605.10">
    <property type="entry name" value="Aldehyde Dehydrogenase, Chain A, domain 1"/>
    <property type="match status" value="1"/>
</dbReference>
<dbReference type="Gene3D" id="3.40.309.10">
    <property type="entry name" value="Aldehyde Dehydrogenase, Chain A, domain 2"/>
    <property type="match status" value="1"/>
</dbReference>
<dbReference type="HAMAP" id="MF_00412">
    <property type="entry name" value="ProA"/>
    <property type="match status" value="1"/>
</dbReference>
<dbReference type="InterPro" id="IPR016161">
    <property type="entry name" value="Ald_DH/histidinol_DH"/>
</dbReference>
<dbReference type="InterPro" id="IPR016163">
    <property type="entry name" value="Ald_DH_C"/>
</dbReference>
<dbReference type="InterPro" id="IPR016162">
    <property type="entry name" value="Ald_DH_N"/>
</dbReference>
<dbReference type="InterPro" id="IPR015590">
    <property type="entry name" value="Aldehyde_DH_dom"/>
</dbReference>
<dbReference type="InterPro" id="IPR020593">
    <property type="entry name" value="G-glutamylP_reductase_CS"/>
</dbReference>
<dbReference type="InterPro" id="IPR012134">
    <property type="entry name" value="Glu-5-SA_DH"/>
</dbReference>
<dbReference type="InterPro" id="IPR000965">
    <property type="entry name" value="GPR_dom"/>
</dbReference>
<dbReference type="NCBIfam" id="NF001221">
    <property type="entry name" value="PRK00197.1"/>
    <property type="match status" value="1"/>
</dbReference>
<dbReference type="NCBIfam" id="TIGR00407">
    <property type="entry name" value="proA"/>
    <property type="match status" value="1"/>
</dbReference>
<dbReference type="PANTHER" id="PTHR11063:SF8">
    <property type="entry name" value="DELTA-1-PYRROLINE-5-CARBOXYLATE SYNTHASE"/>
    <property type="match status" value="1"/>
</dbReference>
<dbReference type="PANTHER" id="PTHR11063">
    <property type="entry name" value="GLUTAMATE SEMIALDEHYDE DEHYDROGENASE"/>
    <property type="match status" value="1"/>
</dbReference>
<dbReference type="Pfam" id="PF00171">
    <property type="entry name" value="Aldedh"/>
    <property type="match status" value="1"/>
</dbReference>
<dbReference type="PIRSF" id="PIRSF000151">
    <property type="entry name" value="GPR"/>
    <property type="match status" value="1"/>
</dbReference>
<dbReference type="SUPFAM" id="SSF53720">
    <property type="entry name" value="ALDH-like"/>
    <property type="match status" value="1"/>
</dbReference>
<dbReference type="PROSITE" id="PS01223">
    <property type="entry name" value="PROA"/>
    <property type="match status" value="1"/>
</dbReference>
<proteinExistence type="inferred from homology"/>
<reference key="1">
    <citation type="journal article" date="2006" name="Nat. Biotechnol.">
        <title>The genome and transcriptomes of the anti-tumor agent Clostridium novyi-NT.</title>
        <authorList>
            <person name="Bettegowda C."/>
            <person name="Huang X."/>
            <person name="Lin J."/>
            <person name="Cheong I."/>
            <person name="Kohli M."/>
            <person name="Szabo S.A."/>
            <person name="Zhang X."/>
            <person name="Diaz L.A. Jr."/>
            <person name="Velculescu V.E."/>
            <person name="Parmigiani G."/>
            <person name="Kinzler K.W."/>
            <person name="Vogelstein B."/>
            <person name="Zhou S."/>
        </authorList>
    </citation>
    <scope>NUCLEOTIDE SEQUENCE [LARGE SCALE GENOMIC DNA]</scope>
    <source>
        <strain>NT</strain>
    </source>
</reference>
<comment type="function">
    <text evidence="1">Catalyzes the NADPH-dependent reduction of L-glutamate 5-phosphate into L-glutamate 5-semialdehyde and phosphate. The product spontaneously undergoes cyclization to form 1-pyrroline-5-carboxylate.</text>
</comment>
<comment type="catalytic activity">
    <reaction evidence="1">
        <text>L-glutamate 5-semialdehyde + phosphate + NADP(+) = L-glutamyl 5-phosphate + NADPH + H(+)</text>
        <dbReference type="Rhea" id="RHEA:19541"/>
        <dbReference type="ChEBI" id="CHEBI:15378"/>
        <dbReference type="ChEBI" id="CHEBI:43474"/>
        <dbReference type="ChEBI" id="CHEBI:57783"/>
        <dbReference type="ChEBI" id="CHEBI:58066"/>
        <dbReference type="ChEBI" id="CHEBI:58274"/>
        <dbReference type="ChEBI" id="CHEBI:58349"/>
        <dbReference type="EC" id="1.2.1.41"/>
    </reaction>
</comment>
<comment type="pathway">
    <text evidence="1">Amino-acid biosynthesis; L-proline biosynthesis; L-glutamate 5-semialdehyde from L-glutamate: step 2/2.</text>
</comment>
<comment type="subcellular location">
    <subcellularLocation>
        <location evidence="1">Cytoplasm</location>
    </subcellularLocation>
</comment>
<comment type="similarity">
    <text evidence="1">Belongs to the gamma-glutamyl phosphate reductase family.</text>
</comment>
<sequence length="417" mass="45237">MNIENYVIETASLAKSAARKMSIVSTVTKNNALNAMADALIENTNAIIEANKKDMENGREKGLTESLLDRLLLDEARIKSMAQGLRDVASLEDPIGEVIRMWRRPNNLKIGQIRVPLGVIGIIYEARPNVTVDAAALCVKSGNAVILRGGSEAINSNTTVARIISEAATKAGLPEGAINLIENPSRDAVNVMMKLNDYIDVLIPRGGAGLINAVVKNATVPVIQTGVGNCHVFVDASADLEMAANIVINAKTQRPAVCNAMESLLVHKDIADKFLPYLAEKLKPLNVEIKGCIRTQSLVEGATEATEEDWAKEYLDFKFASKVVDSLDEALDHIYKYSTKHSEVIVTNNYENSQRFLAEVDAAAVYVNASSRFTDGSEFGFGAEIGISTQKLHARGPMGLKELTSSKYIIYGEGQIR</sequence>
<protein>
    <recommendedName>
        <fullName evidence="1">Gamma-glutamyl phosphate reductase</fullName>
        <shortName evidence="1">GPR</shortName>
        <ecNumber evidence="1">1.2.1.41</ecNumber>
    </recommendedName>
    <alternativeName>
        <fullName evidence="1">Glutamate-5-semialdehyde dehydrogenase</fullName>
    </alternativeName>
    <alternativeName>
        <fullName evidence="1">Glutamyl-gamma-semialdehyde dehydrogenase</fullName>
        <shortName evidence="1">GSA dehydrogenase</shortName>
    </alternativeName>
</protein>
<organism>
    <name type="scientific">Clostridium novyi (strain NT)</name>
    <dbReference type="NCBI Taxonomy" id="386415"/>
    <lineage>
        <taxon>Bacteria</taxon>
        <taxon>Bacillati</taxon>
        <taxon>Bacillota</taxon>
        <taxon>Clostridia</taxon>
        <taxon>Eubacteriales</taxon>
        <taxon>Clostridiaceae</taxon>
        <taxon>Clostridium</taxon>
    </lineage>
</organism>
<accession>A0PXA4</accession>
<gene>
    <name evidence="1" type="primary">proA</name>
    <name type="ordered locus">NT01CX_0901</name>
</gene>
<name>PROA_CLONN</name>